<dbReference type="EC" id="2.7.7.6" evidence="1"/>
<dbReference type="EMBL" id="CP000034">
    <property type="protein sequence ID" value="ABB63998.1"/>
    <property type="molecule type" value="Genomic_DNA"/>
</dbReference>
<dbReference type="RefSeq" id="WP_000135058.1">
    <property type="nucleotide sequence ID" value="NC_007606.1"/>
</dbReference>
<dbReference type="RefSeq" id="YP_405489.1">
    <property type="nucleotide sequence ID" value="NC_007606.1"/>
</dbReference>
<dbReference type="SMR" id="Q329K7"/>
<dbReference type="STRING" id="300267.SDY_4081"/>
<dbReference type="EnsemblBacteria" id="ABB63998">
    <property type="protein sequence ID" value="ABB63998"/>
    <property type="gene ID" value="SDY_4081"/>
</dbReference>
<dbReference type="GeneID" id="98390719"/>
<dbReference type="KEGG" id="sdy:SDY_4081"/>
<dbReference type="PATRIC" id="fig|300267.13.peg.4802"/>
<dbReference type="HOGENOM" id="CLU_125406_5_3_6"/>
<dbReference type="PRO" id="PR:Q329K7"/>
<dbReference type="Proteomes" id="UP000002716">
    <property type="component" value="Chromosome"/>
</dbReference>
<dbReference type="GO" id="GO:0000428">
    <property type="term" value="C:DNA-directed RNA polymerase complex"/>
    <property type="evidence" value="ECO:0007669"/>
    <property type="project" value="UniProtKB-KW"/>
</dbReference>
<dbReference type="GO" id="GO:0003677">
    <property type="term" value="F:DNA binding"/>
    <property type="evidence" value="ECO:0007669"/>
    <property type="project" value="UniProtKB-UniRule"/>
</dbReference>
<dbReference type="GO" id="GO:0003899">
    <property type="term" value="F:DNA-directed RNA polymerase activity"/>
    <property type="evidence" value="ECO:0007669"/>
    <property type="project" value="UniProtKB-UniRule"/>
</dbReference>
<dbReference type="GO" id="GO:0006351">
    <property type="term" value="P:DNA-templated transcription"/>
    <property type="evidence" value="ECO:0007669"/>
    <property type="project" value="UniProtKB-UniRule"/>
</dbReference>
<dbReference type="FunFam" id="3.90.940.10:FF:000001">
    <property type="entry name" value="DNA-directed RNA polymerase subunit omega"/>
    <property type="match status" value="1"/>
</dbReference>
<dbReference type="Gene3D" id="3.90.940.10">
    <property type="match status" value="1"/>
</dbReference>
<dbReference type="HAMAP" id="MF_00366">
    <property type="entry name" value="RNApol_bact_RpoZ"/>
    <property type="match status" value="1"/>
</dbReference>
<dbReference type="InterPro" id="IPR003716">
    <property type="entry name" value="DNA-dir_RNA_pol_omega"/>
</dbReference>
<dbReference type="InterPro" id="IPR006110">
    <property type="entry name" value="Pol_omega/Rpo6/RPB6"/>
</dbReference>
<dbReference type="InterPro" id="IPR036161">
    <property type="entry name" value="RPB6/omega-like_sf"/>
</dbReference>
<dbReference type="NCBIfam" id="TIGR00690">
    <property type="entry name" value="rpoZ"/>
    <property type="match status" value="1"/>
</dbReference>
<dbReference type="PANTHER" id="PTHR34476">
    <property type="entry name" value="DNA-DIRECTED RNA POLYMERASE SUBUNIT OMEGA"/>
    <property type="match status" value="1"/>
</dbReference>
<dbReference type="PANTHER" id="PTHR34476:SF1">
    <property type="entry name" value="DNA-DIRECTED RNA POLYMERASE SUBUNIT OMEGA"/>
    <property type="match status" value="1"/>
</dbReference>
<dbReference type="Pfam" id="PF01192">
    <property type="entry name" value="RNA_pol_Rpb6"/>
    <property type="match status" value="1"/>
</dbReference>
<dbReference type="SMART" id="SM01409">
    <property type="entry name" value="RNA_pol_Rpb6"/>
    <property type="match status" value="1"/>
</dbReference>
<dbReference type="SUPFAM" id="SSF63562">
    <property type="entry name" value="RPB6/omega subunit-like"/>
    <property type="match status" value="1"/>
</dbReference>
<keyword id="KW-0240">DNA-directed RNA polymerase</keyword>
<keyword id="KW-0548">Nucleotidyltransferase</keyword>
<keyword id="KW-1185">Reference proteome</keyword>
<keyword id="KW-0804">Transcription</keyword>
<keyword id="KW-0808">Transferase</keyword>
<proteinExistence type="inferred from homology"/>
<feature type="chain" id="PRO_0000237505" description="DNA-directed RNA polymerase subunit omega">
    <location>
        <begin position="1"/>
        <end position="91"/>
    </location>
</feature>
<protein>
    <recommendedName>
        <fullName evidence="1">DNA-directed RNA polymerase subunit omega</fullName>
        <shortName evidence="1">RNAP omega subunit</shortName>
        <ecNumber evidence="1">2.7.7.6</ecNumber>
    </recommendedName>
    <alternativeName>
        <fullName evidence="1">RNA polymerase omega subunit</fullName>
    </alternativeName>
    <alternativeName>
        <fullName evidence="1">Transcriptase subunit omega</fullName>
    </alternativeName>
</protein>
<organism>
    <name type="scientific">Shigella dysenteriae serotype 1 (strain Sd197)</name>
    <dbReference type="NCBI Taxonomy" id="300267"/>
    <lineage>
        <taxon>Bacteria</taxon>
        <taxon>Pseudomonadati</taxon>
        <taxon>Pseudomonadota</taxon>
        <taxon>Gammaproteobacteria</taxon>
        <taxon>Enterobacterales</taxon>
        <taxon>Enterobacteriaceae</taxon>
        <taxon>Shigella</taxon>
    </lineage>
</organism>
<gene>
    <name evidence="1" type="primary">rpoZ</name>
    <name type="ordered locus">SDY_4081</name>
</gene>
<evidence type="ECO:0000255" key="1">
    <source>
        <dbReference type="HAMAP-Rule" id="MF_00366"/>
    </source>
</evidence>
<sequence>MARVTVQDAVEKIGNRFDLVLVAARRARQMQVGGKDPLVPEENDKTTVIALREIEEGLINNQILDVRERQEQQEQEAAELQAVTAIAEGRR</sequence>
<reference key="1">
    <citation type="journal article" date="2005" name="Nucleic Acids Res.">
        <title>Genome dynamics and diversity of Shigella species, the etiologic agents of bacillary dysentery.</title>
        <authorList>
            <person name="Yang F."/>
            <person name="Yang J."/>
            <person name="Zhang X."/>
            <person name="Chen L."/>
            <person name="Jiang Y."/>
            <person name="Yan Y."/>
            <person name="Tang X."/>
            <person name="Wang J."/>
            <person name="Xiong Z."/>
            <person name="Dong J."/>
            <person name="Xue Y."/>
            <person name="Zhu Y."/>
            <person name="Xu X."/>
            <person name="Sun L."/>
            <person name="Chen S."/>
            <person name="Nie H."/>
            <person name="Peng J."/>
            <person name="Xu J."/>
            <person name="Wang Y."/>
            <person name="Yuan Z."/>
            <person name="Wen Y."/>
            <person name="Yao Z."/>
            <person name="Shen Y."/>
            <person name="Qiang B."/>
            <person name="Hou Y."/>
            <person name="Yu J."/>
            <person name="Jin Q."/>
        </authorList>
    </citation>
    <scope>NUCLEOTIDE SEQUENCE [LARGE SCALE GENOMIC DNA]</scope>
    <source>
        <strain>Sd197</strain>
    </source>
</reference>
<name>RPOZ_SHIDS</name>
<comment type="function">
    <text evidence="1">Promotes RNA polymerase assembly. Latches the N- and C-terminal regions of the beta' subunit thereby facilitating its interaction with the beta and alpha subunits.</text>
</comment>
<comment type="catalytic activity">
    <reaction evidence="1">
        <text>RNA(n) + a ribonucleoside 5'-triphosphate = RNA(n+1) + diphosphate</text>
        <dbReference type="Rhea" id="RHEA:21248"/>
        <dbReference type="Rhea" id="RHEA-COMP:14527"/>
        <dbReference type="Rhea" id="RHEA-COMP:17342"/>
        <dbReference type="ChEBI" id="CHEBI:33019"/>
        <dbReference type="ChEBI" id="CHEBI:61557"/>
        <dbReference type="ChEBI" id="CHEBI:140395"/>
        <dbReference type="EC" id="2.7.7.6"/>
    </reaction>
</comment>
<comment type="subunit">
    <text evidence="1">The RNAP catalytic core consists of 2 alpha, 1 beta, 1 beta' and 1 omega subunit. When a sigma factor is associated with the core the holoenzyme is formed, which can initiate transcription.</text>
</comment>
<comment type="similarity">
    <text evidence="1">Belongs to the RNA polymerase subunit omega family.</text>
</comment>
<accession>Q329K7</accession>